<comment type="function">
    <text evidence="5 7 8 9">Transcription factor that acts as a key regulator of spermatogenesis (PubMed:26162102, PubMed:26248850, PubMed:26853561). Acts by regulating expression of genes required for the haploid phase during spermiogenesis, such as genes required for cilium assembly and function (PubMed:26162102, PubMed:26853561). Recognizes and binds the X-box, a regulatory motif with DNA sequence 5'-GTNRCC(0-3N)RGYAAC-3' present on promoters (PubMed:15229132, PubMed:26162102). Probably activates transcription of the testis-specific histone gene H1-6 (PubMed:15229132).</text>
</comment>
<comment type="subunit">
    <text evidence="5">Homodimer; probably only forms homodimers in testis (PubMed:15229132). Heterodimer; heterodimerizes with RFX1 and RFX3 (PubMed:15229132).</text>
</comment>
<comment type="subcellular location">
    <subcellularLocation>
        <location evidence="1 3">Nucleus</location>
    </subcellularLocation>
    <subcellularLocation>
        <location evidence="1">Cytoplasm</location>
    </subcellularLocation>
    <text evidence="1">Mainly expressed in the nucleus and at lower level in cytoplasm.</text>
</comment>
<comment type="alternative products">
    <event type="alternative splicing"/>
    <isoform>
        <id>P48379-1</id>
        <name>1</name>
        <sequence type="displayed"/>
    </isoform>
    <isoform>
        <id>P48379-2</id>
        <name>2</name>
        <sequence type="described" ref="VSP_037812"/>
    </isoform>
</comment>
<comment type="developmental stage">
    <text evidence="6 8">Detected in the anterior primitive streak preceding the morphological appearance of the node at 7.0 dpc. Expressed in the node and in the midline notochordal plate cells extending anteriorly from the node at 7.5 dpc. At 8.5 dpc, expressed in the node now located in the tail region. At 9.5 dpc, detected in the floor plate and in the dorsal portion of the neural tube, with highest expression in the anterior portion of the spinal cord. Also expressed in the developing gut. At 10.5 dpc, also observed in the telencephalon region of the brain and in the anterior portion of the limb bud at 12.5 dpc (PubMed:26248850). Localizes to cells at the posterior margin of the ciliated organ of asymmetry (PubMed:22233545).</text>
</comment>
<comment type="disruption phenotype">
    <text evidence="7 8 9">Mice are perfectly viable but show complete male sterility (PubMed:26162102, PubMed:26248850, PubMed:26853561). Spermatogenesis proceeds normally through meiosis. However, haploid cells undergo a complete arrest in spermatid development before spermatid elongation (PubMed:26162102, PubMed:26248850). Arrested cells show altered Golgi apparatus organization, leading to a deficit in the generation of a spreading acrosomal cap from proacrosomal vesicles and merge to form giant multinucleated cells released to the epididymis. Spermatids also completely fail to form the flagellar axoneme (PubMed:26162102).</text>
</comment>
<comment type="similarity">
    <text evidence="3">Belongs to the RFX family.</text>
</comment>
<reference key="1">
    <citation type="journal article" date="1994" name="Mol. Cell. Biol.">
        <title>RFX1, a transactivator of hepatitis B virus enhancer I, belongs to a novel family of homodimeric and heterodimeric DNA-binding proteins.</title>
        <authorList>
            <person name="Reith W."/>
            <person name="Ucla C."/>
            <person name="Barras E."/>
            <person name="Gaud A."/>
            <person name="Durand B."/>
            <person name="Herrero-Sanchez C."/>
            <person name="Kobr M."/>
            <person name="Mach B."/>
        </authorList>
    </citation>
    <scope>NUCLEOTIDE SEQUENCE [MRNA] (ISOFORM 2)</scope>
    <source>
        <strain>BALB/cJ</strain>
        <tissue>Spleen</tissue>
    </source>
</reference>
<reference key="2">
    <citation type="journal article" date="2005" name="Science">
        <title>The transcriptional landscape of the mammalian genome.</title>
        <authorList>
            <person name="Carninci P."/>
            <person name="Kasukawa T."/>
            <person name="Katayama S."/>
            <person name="Gough J."/>
            <person name="Frith M.C."/>
            <person name="Maeda N."/>
            <person name="Oyama R."/>
            <person name="Ravasi T."/>
            <person name="Lenhard B."/>
            <person name="Wells C."/>
            <person name="Kodzius R."/>
            <person name="Shimokawa K."/>
            <person name="Bajic V.B."/>
            <person name="Brenner S.E."/>
            <person name="Batalov S."/>
            <person name="Forrest A.R."/>
            <person name="Zavolan M."/>
            <person name="Davis M.J."/>
            <person name="Wilming L.G."/>
            <person name="Aidinis V."/>
            <person name="Allen J.E."/>
            <person name="Ambesi-Impiombato A."/>
            <person name="Apweiler R."/>
            <person name="Aturaliya R.N."/>
            <person name="Bailey T.L."/>
            <person name="Bansal M."/>
            <person name="Baxter L."/>
            <person name="Beisel K.W."/>
            <person name="Bersano T."/>
            <person name="Bono H."/>
            <person name="Chalk A.M."/>
            <person name="Chiu K.P."/>
            <person name="Choudhary V."/>
            <person name="Christoffels A."/>
            <person name="Clutterbuck D.R."/>
            <person name="Crowe M.L."/>
            <person name="Dalla E."/>
            <person name="Dalrymple B.P."/>
            <person name="de Bono B."/>
            <person name="Della Gatta G."/>
            <person name="di Bernardo D."/>
            <person name="Down T."/>
            <person name="Engstrom P."/>
            <person name="Fagiolini M."/>
            <person name="Faulkner G."/>
            <person name="Fletcher C.F."/>
            <person name="Fukushima T."/>
            <person name="Furuno M."/>
            <person name="Futaki S."/>
            <person name="Gariboldi M."/>
            <person name="Georgii-Hemming P."/>
            <person name="Gingeras T.R."/>
            <person name="Gojobori T."/>
            <person name="Green R.E."/>
            <person name="Gustincich S."/>
            <person name="Harbers M."/>
            <person name="Hayashi Y."/>
            <person name="Hensch T.K."/>
            <person name="Hirokawa N."/>
            <person name="Hill D."/>
            <person name="Huminiecki L."/>
            <person name="Iacono M."/>
            <person name="Ikeo K."/>
            <person name="Iwama A."/>
            <person name="Ishikawa T."/>
            <person name="Jakt M."/>
            <person name="Kanapin A."/>
            <person name="Katoh M."/>
            <person name="Kawasawa Y."/>
            <person name="Kelso J."/>
            <person name="Kitamura H."/>
            <person name="Kitano H."/>
            <person name="Kollias G."/>
            <person name="Krishnan S.P."/>
            <person name="Kruger A."/>
            <person name="Kummerfeld S.K."/>
            <person name="Kurochkin I.V."/>
            <person name="Lareau L.F."/>
            <person name="Lazarevic D."/>
            <person name="Lipovich L."/>
            <person name="Liu J."/>
            <person name="Liuni S."/>
            <person name="McWilliam S."/>
            <person name="Madan Babu M."/>
            <person name="Madera M."/>
            <person name="Marchionni L."/>
            <person name="Matsuda H."/>
            <person name="Matsuzawa S."/>
            <person name="Miki H."/>
            <person name="Mignone F."/>
            <person name="Miyake S."/>
            <person name="Morris K."/>
            <person name="Mottagui-Tabar S."/>
            <person name="Mulder N."/>
            <person name="Nakano N."/>
            <person name="Nakauchi H."/>
            <person name="Ng P."/>
            <person name="Nilsson R."/>
            <person name="Nishiguchi S."/>
            <person name="Nishikawa S."/>
            <person name="Nori F."/>
            <person name="Ohara O."/>
            <person name="Okazaki Y."/>
            <person name="Orlando V."/>
            <person name="Pang K.C."/>
            <person name="Pavan W.J."/>
            <person name="Pavesi G."/>
            <person name="Pesole G."/>
            <person name="Petrovsky N."/>
            <person name="Piazza S."/>
            <person name="Reed J."/>
            <person name="Reid J.F."/>
            <person name="Ring B.Z."/>
            <person name="Ringwald M."/>
            <person name="Rost B."/>
            <person name="Ruan Y."/>
            <person name="Salzberg S.L."/>
            <person name="Sandelin A."/>
            <person name="Schneider C."/>
            <person name="Schoenbach C."/>
            <person name="Sekiguchi K."/>
            <person name="Semple C.A."/>
            <person name="Seno S."/>
            <person name="Sessa L."/>
            <person name="Sheng Y."/>
            <person name="Shibata Y."/>
            <person name="Shimada H."/>
            <person name="Shimada K."/>
            <person name="Silva D."/>
            <person name="Sinclair B."/>
            <person name="Sperling S."/>
            <person name="Stupka E."/>
            <person name="Sugiura K."/>
            <person name="Sultana R."/>
            <person name="Takenaka Y."/>
            <person name="Taki K."/>
            <person name="Tammoja K."/>
            <person name="Tan S.L."/>
            <person name="Tang S."/>
            <person name="Taylor M.S."/>
            <person name="Tegner J."/>
            <person name="Teichmann S.A."/>
            <person name="Ueda H.R."/>
            <person name="van Nimwegen E."/>
            <person name="Verardo R."/>
            <person name="Wei C.L."/>
            <person name="Yagi K."/>
            <person name="Yamanishi H."/>
            <person name="Zabarovsky E."/>
            <person name="Zhu S."/>
            <person name="Zimmer A."/>
            <person name="Hide W."/>
            <person name="Bult C."/>
            <person name="Grimmond S.M."/>
            <person name="Teasdale R.D."/>
            <person name="Liu E.T."/>
            <person name="Brusic V."/>
            <person name="Quackenbush J."/>
            <person name="Wahlestedt C."/>
            <person name="Mattick J.S."/>
            <person name="Hume D.A."/>
            <person name="Kai C."/>
            <person name="Sasaki D."/>
            <person name="Tomaru Y."/>
            <person name="Fukuda S."/>
            <person name="Kanamori-Katayama M."/>
            <person name="Suzuki M."/>
            <person name="Aoki J."/>
            <person name="Arakawa T."/>
            <person name="Iida J."/>
            <person name="Imamura K."/>
            <person name="Itoh M."/>
            <person name="Kato T."/>
            <person name="Kawaji H."/>
            <person name="Kawagashira N."/>
            <person name="Kawashima T."/>
            <person name="Kojima M."/>
            <person name="Kondo S."/>
            <person name="Konno H."/>
            <person name="Nakano K."/>
            <person name="Ninomiya N."/>
            <person name="Nishio T."/>
            <person name="Okada M."/>
            <person name="Plessy C."/>
            <person name="Shibata K."/>
            <person name="Shiraki T."/>
            <person name="Suzuki S."/>
            <person name="Tagami M."/>
            <person name="Waki K."/>
            <person name="Watahiki A."/>
            <person name="Okamura-Oho Y."/>
            <person name="Suzuki H."/>
            <person name="Kawai J."/>
            <person name="Hayashizaki Y."/>
        </authorList>
    </citation>
    <scope>NUCLEOTIDE SEQUENCE [LARGE SCALE MRNA] (ISOFORM 1)</scope>
    <source>
        <strain>C57BL/6J</strain>
        <tissue>Retina</tissue>
    </source>
</reference>
<reference key="3">
    <citation type="journal article" date="2004" name="Genome Res.">
        <title>The status, quality, and expansion of the NIH full-length cDNA project: the Mammalian Gene Collection (MGC).</title>
        <authorList>
            <consortium name="The MGC Project Team"/>
        </authorList>
    </citation>
    <scope>NUCLEOTIDE SEQUENCE [LARGE SCALE MRNA] (ISOFORM 2)</scope>
    <source>
        <strain>FVB/N</strain>
        <tissue>Mammary gland</tissue>
    </source>
</reference>
<reference key="4">
    <citation type="journal article" date="2004" name="Biol. Reprod.">
        <title>RFX2 is a potential transcriptional regulatory factor for histone H1t and other genes expressed during the meiotic phase of spermatogenesis.</title>
        <authorList>
            <person name="Horvath G.C."/>
            <person name="Kistler W.S."/>
            <person name="Kistler M.K."/>
        </authorList>
    </citation>
    <scope>FUNCTION</scope>
    <scope>SUBUNIT</scope>
    <scope>DNA-BINDING</scope>
</reference>
<reference key="5">
    <citation type="journal article" date="2010" name="Cell">
        <title>A tissue-specific atlas of mouse protein phosphorylation and expression.</title>
        <authorList>
            <person name="Huttlin E.L."/>
            <person name="Jedrychowski M.P."/>
            <person name="Elias J.E."/>
            <person name="Goswami T."/>
            <person name="Rad R."/>
            <person name="Beausoleil S.A."/>
            <person name="Villen J."/>
            <person name="Haas W."/>
            <person name="Sowa M.E."/>
            <person name="Gygi S.P."/>
        </authorList>
    </citation>
    <scope>IDENTIFICATION BY MASS SPECTROMETRY [LARGE SCALE ANALYSIS]</scope>
    <source>
        <tissue>Testis</tissue>
    </source>
</reference>
<reference key="6">
    <citation type="journal article" date="2012" name="Dev. Biol.">
        <title>RFX2 is essential in the ciliated organ of asymmetry and an RFX2 transgene identifies a population of ciliated cells sufficient for fluid flow.</title>
        <authorList>
            <person name="Bisgrove B.W."/>
            <person name="Makova S."/>
            <person name="Yost H.J."/>
            <person name="Brueckner M."/>
        </authorList>
    </citation>
    <scope>DEVELOPMENTAL STAGE</scope>
</reference>
<reference key="7">
    <citation type="journal article" date="2015" name="Genesis">
        <title>Rfx2 is required for spermatogenesis in the mouse.</title>
        <authorList>
            <person name="Shawlot W."/>
            <person name="Vazquez-Chantada M."/>
            <person name="Wallingford J.B."/>
            <person name="Finnell R.H."/>
        </authorList>
    </citation>
    <scope>FUNCTION</scope>
    <scope>DISRUPTION PHENOTYPE</scope>
    <scope>DEVELOPMENTAL STAGE</scope>
</reference>
<reference key="8">
    <citation type="journal article" date="2015" name="PLoS Genet.">
        <title>RFX2 is a major transcriptional regulator of spermiogenesis.</title>
        <authorList>
            <person name="Kistler W.S."/>
            <person name="Baas D."/>
            <person name="Lemeille S."/>
            <person name="Paschaki M."/>
            <person name="Seguin-Estevez Q."/>
            <person name="Barras E."/>
            <person name="Ma W."/>
            <person name="Duteyrat J.L."/>
            <person name="Morle L."/>
            <person name="Durand B."/>
            <person name="Reith W."/>
        </authorList>
    </citation>
    <scope>FUNCTION</scope>
    <scope>DISRUPTION PHENOTYPE</scope>
    <scope>DNA-BINDING</scope>
</reference>
<reference key="9">
    <citation type="journal article" date="2016" name="Sci. Rep.">
        <title>Transcription factor RFX2 is a key regulator of mouse spermiogenesis.</title>
        <authorList>
            <person name="Wu Y."/>
            <person name="Hu X."/>
            <person name="Li Z."/>
            <person name="Wang M."/>
            <person name="Li S."/>
            <person name="Wang X."/>
            <person name="Lin X."/>
            <person name="Liao S."/>
            <person name="Zhang Z."/>
            <person name="Feng X."/>
            <person name="Wang S."/>
            <person name="Cui X."/>
            <person name="Wang Y."/>
            <person name="Gao F."/>
            <person name="Hess R.A."/>
            <person name="Han C."/>
        </authorList>
    </citation>
    <scope>FUNCTION</scope>
    <scope>DISRUPTION PHENOTYPE</scope>
</reference>
<accession>P48379</accession>
<accession>Q8BXR3</accession>
<feature type="chain" id="PRO_0000215289" description="DNA-binding protein RFX2">
    <location>
        <begin position="1"/>
        <end position="717"/>
    </location>
</feature>
<feature type="DNA-binding region" description="RFX-type winged-helix" evidence="3">
    <location>
        <begin position="194"/>
        <end position="269"/>
    </location>
</feature>
<feature type="region of interest" description="Disordered" evidence="4">
    <location>
        <begin position="1"/>
        <end position="28"/>
    </location>
</feature>
<feature type="region of interest" description="Disordered" evidence="4">
    <location>
        <begin position="286"/>
        <end position="318"/>
    </location>
</feature>
<feature type="region of interest" description="Disordered" evidence="4">
    <location>
        <begin position="685"/>
        <end position="717"/>
    </location>
</feature>
<feature type="compositionally biased region" description="Basic and acidic residues" evidence="4">
    <location>
        <begin position="685"/>
        <end position="710"/>
    </location>
</feature>
<feature type="modified residue" description="Phosphoserine" evidence="2">
    <location>
        <position position="26"/>
    </location>
</feature>
<feature type="modified residue" description="Phosphoserine" evidence="1">
    <location>
        <position position="411"/>
    </location>
</feature>
<feature type="splice variant" id="VSP_037812" description="In isoform 2." evidence="10 11">
    <location>
        <begin position="170"/>
        <end position="194"/>
    </location>
</feature>
<name>RFX2_MOUSE</name>
<dbReference type="EMBL" id="X76089">
    <property type="protein sequence ID" value="CAA53703.1"/>
    <property type="molecule type" value="mRNA"/>
</dbReference>
<dbReference type="EMBL" id="AK044439">
    <property type="protein sequence ID" value="BAC31919.1"/>
    <property type="molecule type" value="mRNA"/>
</dbReference>
<dbReference type="EMBL" id="BC004654">
    <property type="protein sequence ID" value="AAH04654.1"/>
    <property type="molecule type" value="mRNA"/>
</dbReference>
<dbReference type="CCDS" id="CCDS28915.1">
    <molecule id="P48379-2"/>
</dbReference>
<dbReference type="CCDS" id="CCDS50156.1">
    <molecule id="P48379-1"/>
</dbReference>
<dbReference type="PIR" id="C55926">
    <property type="entry name" value="C55926"/>
</dbReference>
<dbReference type="RefSeq" id="NP_033082.1">
    <molecule id="P48379-2"/>
    <property type="nucleotide sequence ID" value="NM_009056.3"/>
</dbReference>
<dbReference type="RefSeq" id="NP_082063.1">
    <molecule id="P48379-1"/>
    <property type="nucleotide sequence ID" value="NM_027787.2"/>
</dbReference>
<dbReference type="SMR" id="P48379"/>
<dbReference type="BioGRID" id="202873">
    <property type="interactions" value="4"/>
</dbReference>
<dbReference type="FunCoup" id="P48379">
    <property type="interactions" value="2423"/>
</dbReference>
<dbReference type="IntAct" id="P48379">
    <property type="interactions" value="4"/>
</dbReference>
<dbReference type="STRING" id="10090.ENSMUSP00000002444"/>
<dbReference type="iPTMnet" id="P48379"/>
<dbReference type="PhosphoSitePlus" id="P48379"/>
<dbReference type="SwissPalm" id="P48379"/>
<dbReference type="PaxDb" id="10090-ENSMUSP00000002444"/>
<dbReference type="PeptideAtlas" id="P48379"/>
<dbReference type="ProteomicsDB" id="254924">
    <molecule id="P48379-1"/>
</dbReference>
<dbReference type="ProteomicsDB" id="254925">
    <molecule id="P48379-2"/>
</dbReference>
<dbReference type="Antibodypedia" id="24073">
    <property type="antibodies" value="152 antibodies from 25 providers"/>
</dbReference>
<dbReference type="DNASU" id="19725"/>
<dbReference type="Ensembl" id="ENSMUST00000002444.15">
    <molecule id="P48379-1"/>
    <property type="protein sequence ID" value="ENSMUSP00000002444.8"/>
    <property type="gene ID" value="ENSMUSG00000024206.16"/>
</dbReference>
<dbReference type="Ensembl" id="ENSMUST00000086801.7">
    <molecule id="P48379-2"/>
    <property type="protein sequence ID" value="ENSMUSP00000084010.6"/>
    <property type="gene ID" value="ENSMUSG00000024206.16"/>
</dbReference>
<dbReference type="GeneID" id="19725"/>
<dbReference type="KEGG" id="mmu:19725"/>
<dbReference type="UCSC" id="uc008ddf.2">
    <molecule id="P48379-2"/>
    <property type="organism name" value="mouse"/>
</dbReference>
<dbReference type="UCSC" id="uc008ddg.2">
    <molecule id="P48379-1"/>
    <property type="organism name" value="mouse"/>
</dbReference>
<dbReference type="AGR" id="MGI:106583"/>
<dbReference type="CTD" id="5990"/>
<dbReference type="MGI" id="MGI:106583">
    <property type="gene designation" value="Rfx2"/>
</dbReference>
<dbReference type="VEuPathDB" id="HostDB:ENSMUSG00000024206"/>
<dbReference type="eggNOG" id="KOG3712">
    <property type="taxonomic scope" value="Eukaryota"/>
</dbReference>
<dbReference type="GeneTree" id="ENSGT01050000244879"/>
<dbReference type="HOGENOM" id="CLU_010393_1_1_1"/>
<dbReference type="InParanoid" id="P48379"/>
<dbReference type="OMA" id="QFIDMSH"/>
<dbReference type="OrthoDB" id="10056949at2759"/>
<dbReference type="PhylomeDB" id="P48379"/>
<dbReference type="TreeFam" id="TF321340"/>
<dbReference type="BioGRID-ORCS" id="19725">
    <property type="hits" value="2 hits in 78 CRISPR screens"/>
</dbReference>
<dbReference type="ChiTaRS" id="Rfx2">
    <property type="organism name" value="mouse"/>
</dbReference>
<dbReference type="PRO" id="PR:P48379"/>
<dbReference type="Proteomes" id="UP000000589">
    <property type="component" value="Chromosome 17"/>
</dbReference>
<dbReference type="RNAct" id="P48379">
    <property type="molecule type" value="protein"/>
</dbReference>
<dbReference type="Bgee" id="ENSMUSG00000024206">
    <property type="expression patterns" value="Expressed in seminiferous tubule of testis and 129 other cell types or tissues"/>
</dbReference>
<dbReference type="ExpressionAtlas" id="P48379">
    <property type="expression patterns" value="baseline and differential"/>
</dbReference>
<dbReference type="GO" id="GO:0005737">
    <property type="term" value="C:cytoplasm"/>
    <property type="evidence" value="ECO:0000250"/>
    <property type="project" value="UniProtKB"/>
</dbReference>
<dbReference type="GO" id="GO:0005634">
    <property type="term" value="C:nucleus"/>
    <property type="evidence" value="ECO:0000250"/>
    <property type="project" value="UniProtKB"/>
</dbReference>
<dbReference type="GO" id="GO:0001228">
    <property type="term" value="F:DNA-binding transcription activator activity, RNA polymerase II-specific"/>
    <property type="evidence" value="ECO:0000315"/>
    <property type="project" value="NTNU_SB"/>
</dbReference>
<dbReference type="GO" id="GO:0003700">
    <property type="term" value="F:DNA-binding transcription factor activity"/>
    <property type="evidence" value="ECO:0000315"/>
    <property type="project" value="UniProtKB"/>
</dbReference>
<dbReference type="GO" id="GO:0000978">
    <property type="term" value="F:RNA polymerase II cis-regulatory region sequence-specific DNA binding"/>
    <property type="evidence" value="ECO:0000315"/>
    <property type="project" value="UniProtKB"/>
</dbReference>
<dbReference type="GO" id="GO:0000977">
    <property type="term" value="F:RNA polymerase II transcription regulatory region sequence-specific DNA binding"/>
    <property type="evidence" value="ECO:0000315"/>
    <property type="project" value="NTNU_SB"/>
</dbReference>
<dbReference type="GO" id="GO:0001675">
    <property type="term" value="P:acrosome assembly"/>
    <property type="evidence" value="ECO:0000315"/>
    <property type="project" value="UniProtKB"/>
</dbReference>
<dbReference type="GO" id="GO:1990830">
    <property type="term" value="P:cellular response to leukemia inhibitory factor"/>
    <property type="evidence" value="ECO:0000270"/>
    <property type="project" value="MGI"/>
</dbReference>
<dbReference type="GO" id="GO:0060271">
    <property type="term" value="P:cilium assembly"/>
    <property type="evidence" value="ECO:0000315"/>
    <property type="project" value="UniProtKB"/>
</dbReference>
<dbReference type="GO" id="GO:0045944">
    <property type="term" value="P:positive regulation of transcription by RNA polymerase II"/>
    <property type="evidence" value="ECO:0000315"/>
    <property type="project" value="NTNU_SB"/>
</dbReference>
<dbReference type="GO" id="GO:0006357">
    <property type="term" value="P:regulation of transcription by RNA polymerase II"/>
    <property type="evidence" value="ECO:0000315"/>
    <property type="project" value="UniProtKB"/>
</dbReference>
<dbReference type="GO" id="GO:0007286">
    <property type="term" value="P:spermatid development"/>
    <property type="evidence" value="ECO:0000315"/>
    <property type="project" value="UniProtKB"/>
</dbReference>
<dbReference type="FunFam" id="1.10.10.10:FF:000017">
    <property type="entry name" value="transcription factor RFX3 isoform X1"/>
    <property type="match status" value="1"/>
</dbReference>
<dbReference type="Gene3D" id="1.10.10.10">
    <property type="entry name" value="Winged helix-like DNA-binding domain superfamily/Winged helix DNA-binding domain"/>
    <property type="match status" value="1"/>
</dbReference>
<dbReference type="InterPro" id="IPR003150">
    <property type="entry name" value="DNA-bd_RFX"/>
</dbReference>
<dbReference type="InterPro" id="IPR039779">
    <property type="entry name" value="RFX-like"/>
</dbReference>
<dbReference type="InterPro" id="IPR007668">
    <property type="entry name" value="RFX1_trans_act"/>
</dbReference>
<dbReference type="InterPro" id="IPR036388">
    <property type="entry name" value="WH-like_DNA-bd_sf"/>
</dbReference>
<dbReference type="InterPro" id="IPR036390">
    <property type="entry name" value="WH_DNA-bd_sf"/>
</dbReference>
<dbReference type="PANTHER" id="PTHR12619:SF17">
    <property type="entry name" value="DNA-BINDING PROTEIN RFX2"/>
    <property type="match status" value="1"/>
</dbReference>
<dbReference type="PANTHER" id="PTHR12619">
    <property type="entry name" value="RFX TRANSCRIPTION FACTOR FAMILY"/>
    <property type="match status" value="1"/>
</dbReference>
<dbReference type="Pfam" id="PF25340">
    <property type="entry name" value="BCD_RFX"/>
    <property type="match status" value="1"/>
</dbReference>
<dbReference type="Pfam" id="PF04589">
    <property type="entry name" value="RFX1_trans_act"/>
    <property type="match status" value="1"/>
</dbReference>
<dbReference type="Pfam" id="PF02257">
    <property type="entry name" value="RFX_DNA_binding"/>
    <property type="match status" value="1"/>
</dbReference>
<dbReference type="SUPFAM" id="SSF46785">
    <property type="entry name" value="Winged helix' DNA-binding domain"/>
    <property type="match status" value="1"/>
</dbReference>
<dbReference type="PROSITE" id="PS51526">
    <property type="entry name" value="RFX_DBD"/>
    <property type="match status" value="1"/>
</dbReference>
<gene>
    <name type="primary">Rfx2</name>
</gene>
<sequence length="717" mass="79190">MQNSEGGADSPASVALRPAAQPMPASPQRVLVQAAGSTPKGTPMQTLTLPRVQPVPPQVQHVYPAQVQYVEGGDAVYANGAIRAAYAYNPDPQLYAPSSAASYFETPGGTQVTVAASSPPAVPSHGMVGITMDVSGTPIVSGAGAYLIHGGMDGTRHSLAHTARSSPATLEMAIETLQKSEGLAPHKGGLLNSHLQWLLDNYETAEGVSLPRSSLYNHYLRHCQEHKLEPVNAASFGKLIRSVFMGLRTRRLGTRGNSKYHYYGIRLKPDSPLNRLQEDTQYMAMRQQPTHQKPRYRPAQKSDSLGDGSAHSNMHGMPDQAMATQGQHHQQYIDVSHVFPEFPAPDLGSTLLQESVTLHDVKALQLVYRRHCEATLDVVMNLQFQYIEKLWLSFWNCKATSSDSCASLPASDEDPEVTLLPKEKLISLCKCEPILQWMRSCDHILYQTLVETLIPDVLRPVPSSLTQAIRNFAKSLEGWLINAMSGFPQQVIQTKVGVVSAFAQTLRRYTSLNHLAQAARAVLQNTSQINQMLSDLNRVDFANVQEQASWVCQCEESLVQRLEHDFKVTLQQQSSLDQWASWLDNVVTQVLKQHSGSPSFPKAARQFLLKWSFYSSMVIRDLTLRSAASFGSFHLIRLLYDEYMFYLVEHRVAQATGETPIAVMGEFNDLASLSLTLLDKEDIGDGHSSEADVDGRSLGEPLVKRERSDPSHPLQGI</sequence>
<organism>
    <name type="scientific">Mus musculus</name>
    <name type="common">Mouse</name>
    <dbReference type="NCBI Taxonomy" id="10090"/>
    <lineage>
        <taxon>Eukaryota</taxon>
        <taxon>Metazoa</taxon>
        <taxon>Chordata</taxon>
        <taxon>Craniata</taxon>
        <taxon>Vertebrata</taxon>
        <taxon>Euteleostomi</taxon>
        <taxon>Mammalia</taxon>
        <taxon>Eutheria</taxon>
        <taxon>Euarchontoglires</taxon>
        <taxon>Glires</taxon>
        <taxon>Rodentia</taxon>
        <taxon>Myomorpha</taxon>
        <taxon>Muroidea</taxon>
        <taxon>Muridae</taxon>
        <taxon>Murinae</taxon>
        <taxon>Mus</taxon>
        <taxon>Mus</taxon>
    </lineage>
</organism>
<evidence type="ECO:0000250" key="1">
    <source>
        <dbReference type="UniProtKB" id="B2GV50"/>
    </source>
</evidence>
<evidence type="ECO:0000250" key="2">
    <source>
        <dbReference type="UniProtKB" id="P48378"/>
    </source>
</evidence>
<evidence type="ECO:0000255" key="3">
    <source>
        <dbReference type="PROSITE-ProRule" id="PRU00858"/>
    </source>
</evidence>
<evidence type="ECO:0000256" key="4">
    <source>
        <dbReference type="SAM" id="MobiDB-lite"/>
    </source>
</evidence>
<evidence type="ECO:0000269" key="5">
    <source>
    </source>
</evidence>
<evidence type="ECO:0000269" key="6">
    <source>
    </source>
</evidence>
<evidence type="ECO:0000269" key="7">
    <source>
    </source>
</evidence>
<evidence type="ECO:0000269" key="8">
    <source>
    </source>
</evidence>
<evidence type="ECO:0000269" key="9">
    <source>
    </source>
</evidence>
<evidence type="ECO:0000303" key="10">
    <source>
    </source>
</evidence>
<evidence type="ECO:0000303" key="11">
    <source>
    </source>
</evidence>
<keyword id="KW-0025">Alternative splicing</keyword>
<keyword id="KW-0970">Cilium biogenesis/degradation</keyword>
<keyword id="KW-0963">Cytoplasm</keyword>
<keyword id="KW-0221">Differentiation</keyword>
<keyword id="KW-0238">DNA-binding</keyword>
<keyword id="KW-0539">Nucleus</keyword>
<keyword id="KW-0597">Phosphoprotein</keyword>
<keyword id="KW-1185">Reference proteome</keyword>
<keyword id="KW-0744">Spermatogenesis</keyword>
<keyword id="KW-0804">Transcription</keyword>
<keyword id="KW-0805">Transcription regulation</keyword>
<protein>
    <recommendedName>
        <fullName>DNA-binding protein RFX2</fullName>
    </recommendedName>
    <alternativeName>
        <fullName>Regulatory factor X 2</fullName>
    </alternativeName>
</protein>
<proteinExistence type="evidence at protein level"/>